<sequence length="155" mass="17548">MGASVKPAARRNARQFALQAIYSWQITKENVATIEAQFLAGEKYDEEEHRAAEPALAAPETDVAYFRDLLTGVVLSHTELDSKIRPYVSRPMQDLDMMELALLRLAMYEMTRREDVPYKVVINEAIELAKVFAAEDSHKFVNGVLDKAAPHVRKK</sequence>
<evidence type="ECO:0000255" key="1">
    <source>
        <dbReference type="HAMAP-Rule" id="MF_00073"/>
    </source>
</evidence>
<name>NUSB_VIBVY</name>
<feature type="chain" id="PRO_0000176606" description="Transcription antitermination protein NusB">
    <location>
        <begin position="1"/>
        <end position="155"/>
    </location>
</feature>
<comment type="function">
    <text evidence="1">Involved in transcription antitermination. Required for transcription of ribosomal RNA (rRNA) genes. Binds specifically to the boxA antiterminator sequence of the ribosomal RNA (rrn) operons.</text>
</comment>
<comment type="similarity">
    <text evidence="1">Belongs to the NusB family.</text>
</comment>
<accession>Q7MN52</accession>
<reference key="1">
    <citation type="journal article" date="2003" name="Genome Res.">
        <title>Comparative genome analysis of Vibrio vulnificus, a marine pathogen.</title>
        <authorList>
            <person name="Chen C.-Y."/>
            <person name="Wu K.-M."/>
            <person name="Chang Y.-C."/>
            <person name="Chang C.-H."/>
            <person name="Tsai H.-C."/>
            <person name="Liao T.-L."/>
            <person name="Liu Y.-M."/>
            <person name="Chen H.-J."/>
            <person name="Shen A.B.-T."/>
            <person name="Li J.-C."/>
            <person name="Su T.-L."/>
            <person name="Shao C.-P."/>
            <person name="Lee C.-T."/>
            <person name="Hor L.-I."/>
            <person name="Tsai S.-F."/>
        </authorList>
    </citation>
    <scope>NUCLEOTIDE SEQUENCE [LARGE SCALE GENOMIC DNA]</scope>
    <source>
        <strain>YJ016</strain>
    </source>
</reference>
<dbReference type="EMBL" id="BA000037">
    <property type="protein sequence ID" value="BAC93629.1"/>
    <property type="molecule type" value="Genomic_DNA"/>
</dbReference>
<dbReference type="RefSeq" id="WP_011078423.1">
    <property type="nucleotide sequence ID" value="NC_005139.1"/>
</dbReference>
<dbReference type="SMR" id="Q7MN52"/>
<dbReference type="STRING" id="672.VV93_v1c08040"/>
<dbReference type="GeneID" id="93894660"/>
<dbReference type="KEGG" id="vvy:VV0865"/>
<dbReference type="eggNOG" id="COG0781">
    <property type="taxonomic scope" value="Bacteria"/>
</dbReference>
<dbReference type="HOGENOM" id="CLU_087843_4_1_6"/>
<dbReference type="Proteomes" id="UP000002675">
    <property type="component" value="Chromosome I"/>
</dbReference>
<dbReference type="GO" id="GO:0005829">
    <property type="term" value="C:cytosol"/>
    <property type="evidence" value="ECO:0007669"/>
    <property type="project" value="TreeGrafter"/>
</dbReference>
<dbReference type="GO" id="GO:0003723">
    <property type="term" value="F:RNA binding"/>
    <property type="evidence" value="ECO:0007669"/>
    <property type="project" value="UniProtKB-UniRule"/>
</dbReference>
<dbReference type="GO" id="GO:0006353">
    <property type="term" value="P:DNA-templated transcription termination"/>
    <property type="evidence" value="ECO:0007669"/>
    <property type="project" value="UniProtKB-UniRule"/>
</dbReference>
<dbReference type="GO" id="GO:0031564">
    <property type="term" value="P:transcription antitermination"/>
    <property type="evidence" value="ECO:0007669"/>
    <property type="project" value="UniProtKB-KW"/>
</dbReference>
<dbReference type="FunFam" id="1.10.940.10:FF:000001">
    <property type="entry name" value="Transcription antitermination factor NusB"/>
    <property type="match status" value="1"/>
</dbReference>
<dbReference type="Gene3D" id="1.10.940.10">
    <property type="entry name" value="NusB-like"/>
    <property type="match status" value="1"/>
</dbReference>
<dbReference type="HAMAP" id="MF_00073">
    <property type="entry name" value="NusB"/>
    <property type="match status" value="1"/>
</dbReference>
<dbReference type="InterPro" id="IPR035926">
    <property type="entry name" value="NusB-like_sf"/>
</dbReference>
<dbReference type="InterPro" id="IPR011605">
    <property type="entry name" value="NusB_fam"/>
</dbReference>
<dbReference type="InterPro" id="IPR006027">
    <property type="entry name" value="NusB_RsmB_TIM44"/>
</dbReference>
<dbReference type="NCBIfam" id="TIGR01951">
    <property type="entry name" value="nusB"/>
    <property type="match status" value="1"/>
</dbReference>
<dbReference type="PANTHER" id="PTHR11078:SF3">
    <property type="entry name" value="ANTITERMINATION NUSB DOMAIN-CONTAINING PROTEIN"/>
    <property type="match status" value="1"/>
</dbReference>
<dbReference type="PANTHER" id="PTHR11078">
    <property type="entry name" value="N UTILIZATION SUBSTANCE PROTEIN B-RELATED"/>
    <property type="match status" value="1"/>
</dbReference>
<dbReference type="Pfam" id="PF01029">
    <property type="entry name" value="NusB"/>
    <property type="match status" value="1"/>
</dbReference>
<dbReference type="SUPFAM" id="SSF48013">
    <property type="entry name" value="NusB-like"/>
    <property type="match status" value="1"/>
</dbReference>
<organism>
    <name type="scientific">Vibrio vulnificus (strain YJ016)</name>
    <dbReference type="NCBI Taxonomy" id="196600"/>
    <lineage>
        <taxon>Bacteria</taxon>
        <taxon>Pseudomonadati</taxon>
        <taxon>Pseudomonadota</taxon>
        <taxon>Gammaproteobacteria</taxon>
        <taxon>Vibrionales</taxon>
        <taxon>Vibrionaceae</taxon>
        <taxon>Vibrio</taxon>
    </lineage>
</organism>
<proteinExistence type="inferred from homology"/>
<protein>
    <recommendedName>
        <fullName evidence="1">Transcription antitermination protein NusB</fullName>
    </recommendedName>
    <alternativeName>
        <fullName evidence="1">Antitermination factor NusB</fullName>
    </alternativeName>
</protein>
<keyword id="KW-0694">RNA-binding</keyword>
<keyword id="KW-0804">Transcription</keyword>
<keyword id="KW-0889">Transcription antitermination</keyword>
<keyword id="KW-0805">Transcription regulation</keyword>
<gene>
    <name evidence="1" type="primary">nusB</name>
    <name type="ordered locus">VV0865</name>
</gene>